<name>KITH_XANOM</name>
<proteinExistence type="inferred from homology"/>
<feature type="chain" id="PRO_0000242814" description="Thymidine kinase">
    <location>
        <begin position="1"/>
        <end position="209"/>
    </location>
</feature>
<feature type="active site" description="Proton acceptor" evidence="1">
    <location>
        <position position="89"/>
    </location>
</feature>
<feature type="binding site" evidence="1">
    <location>
        <begin position="9"/>
        <end position="16"/>
    </location>
    <ligand>
        <name>ATP</name>
        <dbReference type="ChEBI" id="CHEBI:30616"/>
    </ligand>
</feature>
<feature type="binding site" evidence="1">
    <location>
        <begin position="88"/>
        <end position="91"/>
    </location>
    <ligand>
        <name>ATP</name>
        <dbReference type="ChEBI" id="CHEBI:30616"/>
    </ligand>
</feature>
<evidence type="ECO:0000255" key="1">
    <source>
        <dbReference type="HAMAP-Rule" id="MF_00124"/>
    </source>
</evidence>
<reference key="1">
    <citation type="journal article" date="2005" name="Jpn. Agric. Res. Q.">
        <title>Genome sequence of Xanthomonas oryzae pv. oryzae suggests contribution of large numbers of effector genes and insertion sequences to its race diversity.</title>
        <authorList>
            <person name="Ochiai H."/>
            <person name="Inoue Y."/>
            <person name="Takeya M."/>
            <person name="Sasaki A."/>
            <person name="Kaku H."/>
        </authorList>
    </citation>
    <scope>NUCLEOTIDE SEQUENCE [LARGE SCALE GENOMIC DNA]</scope>
    <source>
        <strain>MAFF 311018</strain>
    </source>
</reference>
<dbReference type="EC" id="2.7.1.21" evidence="1"/>
<dbReference type="EMBL" id="AP008229">
    <property type="protein sequence ID" value="BAE66975.1"/>
    <property type="molecule type" value="Genomic_DNA"/>
</dbReference>
<dbReference type="RefSeq" id="WP_011257210.1">
    <property type="nucleotide sequence ID" value="NC_007705.1"/>
</dbReference>
<dbReference type="SMR" id="Q2P902"/>
<dbReference type="KEGG" id="xom:XOO0220"/>
<dbReference type="HOGENOM" id="CLU_064400_2_1_6"/>
<dbReference type="GO" id="GO:0005829">
    <property type="term" value="C:cytosol"/>
    <property type="evidence" value="ECO:0007669"/>
    <property type="project" value="TreeGrafter"/>
</dbReference>
<dbReference type="GO" id="GO:0005524">
    <property type="term" value="F:ATP binding"/>
    <property type="evidence" value="ECO:0007669"/>
    <property type="project" value="UniProtKB-UniRule"/>
</dbReference>
<dbReference type="GO" id="GO:0004797">
    <property type="term" value="F:thymidine kinase activity"/>
    <property type="evidence" value="ECO:0007669"/>
    <property type="project" value="UniProtKB-UniRule"/>
</dbReference>
<dbReference type="GO" id="GO:0071897">
    <property type="term" value="P:DNA biosynthetic process"/>
    <property type="evidence" value="ECO:0007669"/>
    <property type="project" value="UniProtKB-KW"/>
</dbReference>
<dbReference type="GO" id="GO:0046104">
    <property type="term" value="P:thymidine metabolic process"/>
    <property type="evidence" value="ECO:0007669"/>
    <property type="project" value="TreeGrafter"/>
</dbReference>
<dbReference type="FunFam" id="3.40.50.300:FF:000323">
    <property type="entry name" value="Thymidine kinase"/>
    <property type="match status" value="1"/>
</dbReference>
<dbReference type="Gene3D" id="3.40.50.300">
    <property type="entry name" value="P-loop containing nucleotide triphosphate hydrolases"/>
    <property type="match status" value="1"/>
</dbReference>
<dbReference type="HAMAP" id="MF_00124">
    <property type="entry name" value="Thymidine_kinase"/>
    <property type="match status" value="1"/>
</dbReference>
<dbReference type="InterPro" id="IPR027417">
    <property type="entry name" value="P-loop_NTPase"/>
</dbReference>
<dbReference type="InterPro" id="IPR001267">
    <property type="entry name" value="Thymidine_kinase"/>
</dbReference>
<dbReference type="NCBIfam" id="NF003300">
    <property type="entry name" value="PRK04296.1-5"/>
    <property type="match status" value="1"/>
</dbReference>
<dbReference type="PANTHER" id="PTHR11441">
    <property type="entry name" value="THYMIDINE KINASE"/>
    <property type="match status" value="1"/>
</dbReference>
<dbReference type="PANTHER" id="PTHR11441:SF0">
    <property type="entry name" value="THYMIDINE KINASE, CYTOSOLIC"/>
    <property type="match status" value="1"/>
</dbReference>
<dbReference type="Pfam" id="PF00265">
    <property type="entry name" value="TK"/>
    <property type="match status" value="1"/>
</dbReference>
<dbReference type="PIRSF" id="PIRSF035805">
    <property type="entry name" value="TK_cell"/>
    <property type="match status" value="1"/>
</dbReference>
<dbReference type="SUPFAM" id="SSF57716">
    <property type="entry name" value="Glucocorticoid receptor-like (DNA-binding domain)"/>
    <property type="match status" value="1"/>
</dbReference>
<dbReference type="SUPFAM" id="SSF52540">
    <property type="entry name" value="P-loop containing nucleoside triphosphate hydrolases"/>
    <property type="match status" value="1"/>
</dbReference>
<organism>
    <name type="scientific">Xanthomonas oryzae pv. oryzae (strain MAFF 311018)</name>
    <dbReference type="NCBI Taxonomy" id="342109"/>
    <lineage>
        <taxon>Bacteria</taxon>
        <taxon>Pseudomonadati</taxon>
        <taxon>Pseudomonadota</taxon>
        <taxon>Gammaproteobacteria</taxon>
        <taxon>Lysobacterales</taxon>
        <taxon>Lysobacteraceae</taxon>
        <taxon>Xanthomonas</taxon>
    </lineage>
</organism>
<protein>
    <recommendedName>
        <fullName evidence="1">Thymidine kinase</fullName>
        <ecNumber evidence="1">2.7.1.21</ecNumber>
    </recommendedName>
</protein>
<sequence length="209" mass="23385">MAKLYFYYSAMNAGKTTTLLQSAHNYRERGMRTLILTPKLDHRAGSGVVASRIGLRADGRIFERDTGLQQLVERDIHNDGALHCVLVDEAQFLSRAQVWQLSEVVDRLRVPVLCYGLRTDFRGELFEGSQFLLAWADELEEIKTICHSGSKATMTVRVDAQGHAVQDGPQVEIGGNERYVSVSRAEFKKIMRGEGRIDPLQIALPLPVA</sequence>
<keyword id="KW-0067">ATP-binding</keyword>
<keyword id="KW-0963">Cytoplasm</keyword>
<keyword id="KW-0237">DNA synthesis</keyword>
<keyword id="KW-0418">Kinase</keyword>
<keyword id="KW-0547">Nucleotide-binding</keyword>
<keyword id="KW-0808">Transferase</keyword>
<accession>Q2P902</accession>
<gene>
    <name evidence="1" type="primary">tdk</name>
    <name type="ordered locus">XOO0220</name>
</gene>
<comment type="catalytic activity">
    <reaction evidence="1">
        <text>thymidine + ATP = dTMP + ADP + H(+)</text>
        <dbReference type="Rhea" id="RHEA:19129"/>
        <dbReference type="ChEBI" id="CHEBI:15378"/>
        <dbReference type="ChEBI" id="CHEBI:17748"/>
        <dbReference type="ChEBI" id="CHEBI:30616"/>
        <dbReference type="ChEBI" id="CHEBI:63528"/>
        <dbReference type="ChEBI" id="CHEBI:456216"/>
        <dbReference type="EC" id="2.7.1.21"/>
    </reaction>
</comment>
<comment type="subunit">
    <text evidence="1">Homotetramer.</text>
</comment>
<comment type="subcellular location">
    <subcellularLocation>
        <location evidence="1">Cytoplasm</location>
    </subcellularLocation>
</comment>
<comment type="similarity">
    <text evidence="1">Belongs to the thymidine kinase family.</text>
</comment>